<accession>A7ECE0</accession>
<reference key="1">
    <citation type="journal article" date="2011" name="PLoS Genet.">
        <title>Genomic analysis of the necrotrophic fungal pathogens Sclerotinia sclerotiorum and Botrytis cinerea.</title>
        <authorList>
            <person name="Amselem J."/>
            <person name="Cuomo C.A."/>
            <person name="van Kan J.A.L."/>
            <person name="Viaud M."/>
            <person name="Benito E.P."/>
            <person name="Couloux A."/>
            <person name="Coutinho P.M."/>
            <person name="de Vries R.P."/>
            <person name="Dyer P.S."/>
            <person name="Fillinger S."/>
            <person name="Fournier E."/>
            <person name="Gout L."/>
            <person name="Hahn M."/>
            <person name="Kohn L."/>
            <person name="Lapalu N."/>
            <person name="Plummer K.M."/>
            <person name="Pradier J.-M."/>
            <person name="Quevillon E."/>
            <person name="Sharon A."/>
            <person name="Simon A."/>
            <person name="ten Have A."/>
            <person name="Tudzynski B."/>
            <person name="Tudzynski P."/>
            <person name="Wincker P."/>
            <person name="Andrew M."/>
            <person name="Anthouard V."/>
            <person name="Beever R.E."/>
            <person name="Beffa R."/>
            <person name="Benoit I."/>
            <person name="Bouzid O."/>
            <person name="Brault B."/>
            <person name="Chen Z."/>
            <person name="Choquer M."/>
            <person name="Collemare J."/>
            <person name="Cotton P."/>
            <person name="Danchin E.G."/>
            <person name="Da Silva C."/>
            <person name="Gautier A."/>
            <person name="Giraud C."/>
            <person name="Giraud T."/>
            <person name="Gonzalez C."/>
            <person name="Grossetete S."/>
            <person name="Gueldener U."/>
            <person name="Henrissat B."/>
            <person name="Howlett B.J."/>
            <person name="Kodira C."/>
            <person name="Kretschmer M."/>
            <person name="Lappartient A."/>
            <person name="Leroch M."/>
            <person name="Levis C."/>
            <person name="Mauceli E."/>
            <person name="Neuveglise C."/>
            <person name="Oeser B."/>
            <person name="Pearson M."/>
            <person name="Poulain J."/>
            <person name="Poussereau N."/>
            <person name="Quesneville H."/>
            <person name="Rascle C."/>
            <person name="Schumacher J."/>
            <person name="Segurens B."/>
            <person name="Sexton A."/>
            <person name="Silva E."/>
            <person name="Sirven C."/>
            <person name="Soanes D.M."/>
            <person name="Talbot N.J."/>
            <person name="Templeton M."/>
            <person name="Yandava C."/>
            <person name="Yarden O."/>
            <person name="Zeng Q."/>
            <person name="Rollins J.A."/>
            <person name="Lebrun M.-H."/>
            <person name="Dickman M."/>
        </authorList>
    </citation>
    <scope>NUCLEOTIDE SEQUENCE [LARGE SCALE GENOMIC DNA]</scope>
    <source>
        <strain>ATCC 18683 / 1980 / Ss-1</strain>
    </source>
</reference>
<comment type="subcellular location">
    <subcellularLocation>
        <location>Mitochondrion</location>
    </subcellularLocation>
    <subcellularLocation>
        <location evidence="1">Membrane</location>
        <topology evidence="1">Single-pass membrane protein</topology>
    </subcellularLocation>
</comment>
<comment type="similarity">
    <text evidence="5">Belongs to the LCL3 family.</text>
</comment>
<dbReference type="EC" id="3.1.-.-"/>
<dbReference type="EMBL" id="CH476623">
    <property type="protein sequence ID" value="EDO00119.1"/>
    <property type="molecule type" value="Genomic_DNA"/>
</dbReference>
<dbReference type="RefSeq" id="XP_001596756.1">
    <property type="nucleotide sequence ID" value="XM_001596706.1"/>
</dbReference>
<dbReference type="SMR" id="A7ECE0"/>
<dbReference type="FunCoup" id="A7ECE0">
    <property type="interactions" value="10"/>
</dbReference>
<dbReference type="STRING" id="665079.A7ECE0"/>
<dbReference type="EnsemblFungi" id="EDO00119">
    <property type="protein sequence ID" value="EDO00119"/>
    <property type="gene ID" value="SS1G_02979"/>
</dbReference>
<dbReference type="GeneID" id="5493031"/>
<dbReference type="KEGG" id="ssl:SS1G_02979"/>
<dbReference type="VEuPathDB" id="FungiDB:sscle_04g038610"/>
<dbReference type="eggNOG" id="ENOG502S1U4">
    <property type="taxonomic scope" value="Eukaryota"/>
</dbReference>
<dbReference type="HOGENOM" id="CLU_046484_0_1_1"/>
<dbReference type="InParanoid" id="A7ECE0"/>
<dbReference type="OMA" id="IYHTPGG"/>
<dbReference type="OrthoDB" id="430293at2759"/>
<dbReference type="Proteomes" id="UP000001312">
    <property type="component" value="Unassembled WGS sequence"/>
</dbReference>
<dbReference type="GO" id="GO:0016020">
    <property type="term" value="C:membrane"/>
    <property type="evidence" value="ECO:0007669"/>
    <property type="project" value="UniProtKB-SubCell"/>
</dbReference>
<dbReference type="GO" id="GO:0005739">
    <property type="term" value="C:mitochondrion"/>
    <property type="evidence" value="ECO:0007669"/>
    <property type="project" value="UniProtKB-SubCell"/>
</dbReference>
<dbReference type="GO" id="GO:0004519">
    <property type="term" value="F:endonuclease activity"/>
    <property type="evidence" value="ECO:0007669"/>
    <property type="project" value="UniProtKB-KW"/>
</dbReference>
<dbReference type="GO" id="GO:0046872">
    <property type="term" value="F:metal ion binding"/>
    <property type="evidence" value="ECO:0007669"/>
    <property type="project" value="UniProtKB-KW"/>
</dbReference>
<dbReference type="FunFam" id="2.40.50.90:FF:000029">
    <property type="entry name" value="Probable endonuclease lcl3"/>
    <property type="match status" value="1"/>
</dbReference>
<dbReference type="Gene3D" id="2.40.50.90">
    <property type="match status" value="1"/>
</dbReference>
<dbReference type="InterPro" id="IPR035437">
    <property type="entry name" value="SNase_OB-fold_sf"/>
</dbReference>
<dbReference type="InterPro" id="IPR016071">
    <property type="entry name" value="Staphylococal_nuclease_OB-fold"/>
</dbReference>
<dbReference type="PANTHER" id="PTHR12302">
    <property type="entry name" value="EBNA2 BINDING PROTEIN P100"/>
    <property type="match status" value="1"/>
</dbReference>
<dbReference type="PANTHER" id="PTHR12302:SF3">
    <property type="entry name" value="SERINE_THREONINE-PROTEIN KINASE 31"/>
    <property type="match status" value="1"/>
</dbReference>
<dbReference type="Pfam" id="PF00565">
    <property type="entry name" value="SNase"/>
    <property type="match status" value="1"/>
</dbReference>
<dbReference type="SMART" id="SM00318">
    <property type="entry name" value="SNc"/>
    <property type="match status" value="1"/>
</dbReference>
<dbReference type="SUPFAM" id="SSF50199">
    <property type="entry name" value="Staphylococcal nuclease"/>
    <property type="match status" value="1"/>
</dbReference>
<dbReference type="PROSITE" id="PS50830">
    <property type="entry name" value="TNASE_3"/>
    <property type="match status" value="1"/>
</dbReference>
<organism>
    <name type="scientific">Sclerotinia sclerotiorum (strain ATCC 18683 / 1980 / Ss-1)</name>
    <name type="common">White mold</name>
    <name type="synonym">Whetzelinia sclerotiorum</name>
    <dbReference type="NCBI Taxonomy" id="665079"/>
    <lineage>
        <taxon>Eukaryota</taxon>
        <taxon>Fungi</taxon>
        <taxon>Dikarya</taxon>
        <taxon>Ascomycota</taxon>
        <taxon>Pezizomycotina</taxon>
        <taxon>Leotiomycetes</taxon>
        <taxon>Helotiales</taxon>
        <taxon>Sclerotiniaceae</taxon>
        <taxon>Sclerotinia</taxon>
    </lineage>
</organism>
<gene>
    <name type="primary">lcl3</name>
    <name type="ORF">SS1G_02979</name>
</gene>
<proteinExistence type="inferred from homology"/>
<sequence>MGWLDFNSNSKKEKGKDDARSSFSWGDNLNATDWQHYTDPRTLIPTLLLTTTILFSTRLYRSYLRRIPEATHIRPGFFRKRSLFGTVTRVGDADNFHLFHTPGGRLAGWGWLPGRKTLPEGKDLKNKTIHVRIAGVDAPEGAHFGKPAQPFSAEALAWLRDYIQNRRVRAYIYRRDQYNRVVATVWVRRFLFRKDVGKEMLKAGMATVYEAKMGAEFGDFEAQYRAIEKEAKKNKLGMWSGKKKDYESPRDYKTRTAAAANILK</sequence>
<keyword id="KW-0106">Calcium</keyword>
<keyword id="KW-0255">Endonuclease</keyword>
<keyword id="KW-0378">Hydrolase</keyword>
<keyword id="KW-0472">Membrane</keyword>
<keyword id="KW-0479">Metal-binding</keyword>
<keyword id="KW-0496">Mitochondrion</keyword>
<keyword id="KW-0540">Nuclease</keyword>
<keyword id="KW-1185">Reference proteome</keyword>
<keyword id="KW-0812">Transmembrane</keyword>
<keyword id="KW-1133">Transmembrane helix</keyword>
<evidence type="ECO:0000250" key="1"/>
<evidence type="ECO:0000255" key="2"/>
<evidence type="ECO:0000255" key="3">
    <source>
        <dbReference type="PROSITE-ProRule" id="PRU00272"/>
    </source>
</evidence>
<evidence type="ECO:0000256" key="4">
    <source>
        <dbReference type="SAM" id="MobiDB-lite"/>
    </source>
</evidence>
<evidence type="ECO:0000305" key="5"/>
<protein>
    <recommendedName>
        <fullName>Probable endonuclease lcl3</fullName>
        <ecNumber>3.1.-.-</ecNumber>
    </recommendedName>
</protein>
<feature type="chain" id="PRO_0000408683" description="Probable endonuclease lcl3">
    <location>
        <begin position="1"/>
        <end position="264"/>
    </location>
</feature>
<feature type="transmembrane region" description="Helical" evidence="2">
    <location>
        <begin position="42"/>
        <end position="60"/>
    </location>
</feature>
<feature type="domain" description="TNase-like" evidence="3">
    <location>
        <begin position="81"/>
        <end position="241"/>
    </location>
</feature>
<feature type="region of interest" description="Disordered" evidence="4">
    <location>
        <begin position="1"/>
        <end position="21"/>
    </location>
</feature>
<feature type="compositionally biased region" description="Basic and acidic residues" evidence="4">
    <location>
        <begin position="10"/>
        <end position="20"/>
    </location>
</feature>
<feature type="active site" evidence="3">
    <location>
        <position position="132"/>
    </location>
</feature>
<feature type="active site" evidence="3">
    <location>
        <position position="140"/>
    </location>
</feature>
<feature type="active site" evidence="3">
    <location>
        <position position="180"/>
    </location>
</feature>
<feature type="binding site" evidence="3">
    <location>
        <position position="137"/>
    </location>
    <ligand>
        <name>Ca(2+)</name>
        <dbReference type="ChEBI" id="CHEBI:29108"/>
    </ligand>
</feature>
<name>LCL3_SCLS1</name>